<keyword id="KW-0165">Cleavage on pair of basic residues</keyword>
<keyword id="KW-0175">Coiled coil</keyword>
<keyword id="KW-0903">Direct protein sequencing</keyword>
<keyword id="KW-1015">Disulfide bond</keyword>
<keyword id="KW-1169">Fusion of virus membrane with host cell membrane</keyword>
<keyword id="KW-1168">Fusion of virus membrane with host membrane</keyword>
<keyword id="KW-0325">Glycoprotein</keyword>
<keyword id="KW-1032">Host cell membrane</keyword>
<keyword id="KW-1043">Host membrane</keyword>
<keyword id="KW-0472">Membrane</keyword>
<keyword id="KW-0732">Signal</keyword>
<keyword id="KW-0812">Transmembrane</keyword>
<keyword id="KW-1133">Transmembrane helix</keyword>
<keyword id="KW-0261">Viral envelope protein</keyword>
<keyword id="KW-1162">Viral penetration into host cytoplasm</keyword>
<keyword id="KW-0946">Virion</keyword>
<keyword id="KW-1160">Virus entry into host cell</keyword>
<accession>Q9JAE0</accession>
<proteinExistence type="evidence at protein level"/>
<comment type="function">
    <text evidence="1">Class I viral fusion protein. Under the current model, the protein has at least 3 conformational states: pre-fusion native state, pre-hairpin intermediate state, and post-fusion hairpin state. During viral and plasma cell membrane fusion, the heptad repeat (HR) regions assume a trimer-of-hairpins structure, positioning the fusion peptide in close proximity to the C-terminal region of the ectodomain. The formation of this structure appears to drive apposition and subsequent fusion of viral and plasma cell membranes. Directs fusion of viral and cellular membranes leading to delivery of the nucleocapsid into the cytoplasm. This fusion is pH independent and occurs directly at the outer cell membrane. The trimer of F1-F2 (F protein) probably interacts with HN at the virion surface. Upon HN binding to its cellular receptor, the hydrophobic fusion peptide is unmasked and interacts with the cellular membrane, inducing the fusion between cell and virion membranes. Later in infection, F proteins expressed at the plasma membrane of infected cells could mediate fusion with adjacent cells to form syncytia, a cytopathic effect that could lead to tissue necrosis (By similarity).</text>
</comment>
<comment type="subunit">
    <text evidence="2">Homotrimer; disulfide-linked F1-F2. Interacts with host LAMP1; LAMP2 and LAMP3; these interactions promote the cleavage of the viral fusion protein F.</text>
</comment>
<comment type="subcellular location">
    <subcellularLocation>
        <location evidence="3">Virion membrane</location>
        <topology evidence="5">Single-pass type I membrane protein</topology>
    </subcellularLocation>
    <subcellularLocation>
        <location evidence="6">Host cell membrane</location>
        <topology evidence="5">Single-pass membrane protein</topology>
    </subcellularLocation>
</comment>
<comment type="domain">
    <text evidence="2">The 2 coiled coil regions form a stable six-helix bundle.</text>
</comment>
<comment type="PTM">
    <text evidence="3">The inactive precursor F0 is glycosylated and proteolytically cleaved into F1 and F2 to be functionally active (By similarity). The cleavage is mediated by cellular proteases including host FURIN during the transport and maturation of the polypeptide (By similarity).</text>
</comment>
<comment type="similarity">
    <text evidence="6">Belongs to the paramyxoviruses fusion glycoprotein family.</text>
</comment>
<organism>
    <name type="scientific">Mumps virus (strain Kilham)</name>
    <name type="common">MuV</name>
    <dbReference type="NCBI Taxonomy" id="11169"/>
    <lineage>
        <taxon>Viruses</taxon>
        <taxon>Riboviria</taxon>
        <taxon>Orthornavirae</taxon>
        <taxon>Negarnaviricota</taxon>
        <taxon>Haploviricotina</taxon>
        <taxon>Monjiviricetes</taxon>
        <taxon>Mononegavirales</taxon>
        <taxon>Paramyxoviridae</taxon>
        <taxon>Rubulavirinae</taxon>
        <taxon>Orthorubulavirus</taxon>
        <taxon>Orthorubulavirus parotitidis</taxon>
        <taxon>Mumps orthorubulavirus</taxon>
    </lineage>
</organism>
<reference key="1">
    <citation type="journal article" date="2000" name="Arch. Virol.">
        <title>Antigenic and genetic characterization of the fusion (F) protein of mumps virus strains.</title>
        <authorList>
            <person name="Tecle T."/>
            <person name="Johansson B."/>
            <person name="Yun Z."/>
            <person name="Orvell C."/>
        </authorList>
    </citation>
    <scope>NUCLEOTIDE SEQUENCE [GENOMIC RNA]</scope>
    <source>
        <strain>Kilham</strain>
    </source>
</reference>
<reference key="2">
    <citation type="journal article" date="1985" name="Virology">
        <title>Purification and amino-terminal protein sequence analysis of the mumps virus fusion protein.</title>
        <authorList>
            <person name="Server A.C."/>
            <person name="Smith J.A."/>
            <person name="Waxham M.N."/>
            <person name="Wolinsky J.S."/>
            <person name="Goodman H.M."/>
        </authorList>
    </citation>
    <scope>PROTEIN SEQUENCE OF 20-42 AND 103-125</scope>
    <source>
        <strain>Kilham</strain>
    </source>
</reference>
<name>FUS_MUMPK</name>
<dbReference type="EMBL" id="AF143392">
    <property type="protein sequence ID" value="AAF66650.1"/>
    <property type="molecule type" value="Genomic_RNA"/>
</dbReference>
<dbReference type="GO" id="GO:0020002">
    <property type="term" value="C:host cell plasma membrane"/>
    <property type="evidence" value="ECO:0007669"/>
    <property type="project" value="UniProtKB-SubCell"/>
</dbReference>
<dbReference type="GO" id="GO:0016020">
    <property type="term" value="C:membrane"/>
    <property type="evidence" value="ECO:0007669"/>
    <property type="project" value="UniProtKB-KW"/>
</dbReference>
<dbReference type="GO" id="GO:0019031">
    <property type="term" value="C:viral envelope"/>
    <property type="evidence" value="ECO:0007669"/>
    <property type="project" value="UniProtKB-KW"/>
</dbReference>
<dbReference type="GO" id="GO:0055036">
    <property type="term" value="C:virion membrane"/>
    <property type="evidence" value="ECO:0007669"/>
    <property type="project" value="UniProtKB-SubCell"/>
</dbReference>
<dbReference type="GO" id="GO:0019064">
    <property type="term" value="P:fusion of virus membrane with host plasma membrane"/>
    <property type="evidence" value="ECO:0007669"/>
    <property type="project" value="UniProtKB-KW"/>
</dbReference>
<dbReference type="GO" id="GO:0046718">
    <property type="term" value="P:symbiont entry into host cell"/>
    <property type="evidence" value="ECO:0007669"/>
    <property type="project" value="UniProtKB-KW"/>
</dbReference>
<dbReference type="Gene3D" id="1.10.287.2480">
    <property type="match status" value="1"/>
</dbReference>
<dbReference type="Gene3D" id="6.10.10.110">
    <property type="match status" value="1"/>
</dbReference>
<dbReference type="Gene3D" id="2.60.40.1690">
    <property type="entry name" value="Head and neck region of the ectodomain of NDV fusion glycoprotein"/>
    <property type="match status" value="1"/>
</dbReference>
<dbReference type="Gene3D" id="2.40.490.10">
    <property type="entry name" value="Newcastle disease virus like domain"/>
    <property type="match status" value="1"/>
</dbReference>
<dbReference type="Gene3D" id="1.10.287.770">
    <property type="entry name" value="YojJ-like"/>
    <property type="match status" value="1"/>
</dbReference>
<dbReference type="InterPro" id="IPR000776">
    <property type="entry name" value="Fusion_F0_Paramyxovir"/>
</dbReference>
<dbReference type="Pfam" id="PF00523">
    <property type="entry name" value="Fusion_gly"/>
    <property type="match status" value="1"/>
</dbReference>
<dbReference type="SUPFAM" id="SSF69922">
    <property type="entry name" value="Head and neck region of the ectodomain of NDV fusion glycoprotein"/>
    <property type="match status" value="1"/>
</dbReference>
<dbReference type="SUPFAM" id="SSF58069">
    <property type="entry name" value="Virus ectodomain"/>
    <property type="match status" value="1"/>
</dbReference>
<feature type="signal peptide" evidence="7">
    <location>
        <begin position="1"/>
        <end position="19"/>
    </location>
</feature>
<feature type="chain" id="PRO_0000462010" description="Fusion glycoprotein F0">
    <location>
        <begin position="20"/>
        <end position="538"/>
    </location>
</feature>
<feature type="chain" id="PRO_0000462011" description="Fusion glycoprotein F2" evidence="3">
    <location>
        <begin position="20"/>
        <end position="102"/>
    </location>
</feature>
<feature type="chain" id="PRO_0000462012" description="Fusion glycoprotein F1" evidence="3">
    <location>
        <begin position="103"/>
        <end position="538"/>
    </location>
</feature>
<feature type="transmembrane region" description="Helical" evidence="5">
    <location>
        <begin position="483"/>
        <end position="503"/>
    </location>
</feature>
<feature type="region of interest" description="Fusion peptide" evidence="3">
    <location>
        <begin position="103"/>
        <end position="127"/>
    </location>
</feature>
<feature type="site" description="Determinant for fusogenicity and cleavage efficiency" evidence="3">
    <location>
        <position position="95"/>
    </location>
</feature>
<feature type="site" description="Cleavage; by host" evidence="7">
    <location>
        <begin position="102"/>
        <end position="103"/>
    </location>
</feature>
<feature type="glycosylation site" description="N-linked (GlcNAc...) asparagine; by host" evidence="4">
    <location>
        <position position="56"/>
    </location>
</feature>
<feature type="glycosylation site" description="N-linked (GlcNAc...) asparagine; by host" evidence="5">
    <location>
        <position position="73"/>
    </location>
</feature>
<feature type="glycosylation site" description="N-linked (GlcNAc...) asparagine; by host" evidence="5">
    <location>
        <position position="182"/>
    </location>
</feature>
<feature type="glycosylation site" description="N-linked (GlcNAc...) asparagine; by host" evidence="5">
    <location>
        <position position="352"/>
    </location>
</feature>
<feature type="glycosylation site" description="N-linked (GlcNAc...) asparagine; by host" evidence="5">
    <location>
        <position position="427"/>
    </location>
</feature>
<feature type="glycosylation site" description="N-linked (GlcNAc...) asparagine; by host" evidence="5">
    <location>
        <position position="433"/>
    </location>
</feature>
<feature type="glycosylation site" description="N-linked (GlcNAc...) asparagine; by host" evidence="5">
    <location>
        <position position="457"/>
    </location>
</feature>
<feature type="disulfide bond" description="Interchain (with C-195)" evidence="4">
    <location>
        <position position="64"/>
    </location>
</feature>
<feature type="disulfide bond" description="Interchain (with C-68)" evidence="4">
    <location>
        <position position="185"/>
    </location>
</feature>
<feature type="disulfide bond" evidence="4">
    <location>
        <begin position="324"/>
        <end position="333"/>
    </location>
</feature>
<feature type="disulfide bond" evidence="4">
    <location>
        <begin position="348"/>
        <end position="356"/>
    </location>
</feature>
<feature type="disulfide bond" evidence="4">
    <location>
        <begin position="380"/>
        <end position="385"/>
    </location>
</feature>
<feature type="disulfide bond" evidence="4">
    <location>
        <begin position="387"/>
        <end position="410"/>
    </location>
</feature>
<gene>
    <name type="primary">F</name>
</gene>
<sequence length="538" mass="58739">MKAFPVICLGFAIFSSSICVNINILQQIGYIKQQVWQLSYYSQSSSSYVVVKLLPNIQPTDNSCEFKSVTQYNKTLSNLLLPIAENINNIASPSPGSRRHKRFAGIAIGIAALGVATAAQVTAAVSLVQAQTNARAIAAMKNSIQATNRAVFEVKEGTQQLAIAVQAIQDHINTIMNTQLNNMSCQILDNQLATSLGLYLTELTTVFQPQLINPALSPISIQALRSLLGSMTPAVVQATLSTSISAAEILSAGLMEGQIVSVLLDEMQMIVKINIPTIVTQSNALVIDFHSISSFINNQESIIQLPDRILEIGNEQWRYPAKNCKLTRHHIFCQYNEAERLSLETKLCLAGNISACVFSPIAGSYMRRFVALDGTIVANCRSLTCLCKSPSYPIYQPDHHAVTTIDLTSCQTLSLDGLDFSIVSLSNITYAENLTISLSQTINTQPIDISTELSKVNASLQNAVKYIKESNHQLQSVSVSSKIGAIIVAALVLSILSIIISLLFCCWAYIATKEIRRINFKTNHINTISSSVDDLIRY</sequence>
<evidence type="ECO:0000250" key="1"/>
<evidence type="ECO:0000250" key="2">
    <source>
        <dbReference type="UniProtKB" id="P11236"/>
    </source>
</evidence>
<evidence type="ECO:0000250" key="3">
    <source>
        <dbReference type="UniProtKB" id="Q5SC53"/>
    </source>
</evidence>
<evidence type="ECO:0000250" key="4">
    <source>
        <dbReference type="UniProtKB" id="Q786F3"/>
    </source>
</evidence>
<evidence type="ECO:0000255" key="5"/>
<evidence type="ECO:0000305" key="6"/>
<evidence type="ECO:0000305" key="7">
    <source>
    </source>
</evidence>
<protein>
    <recommendedName>
        <fullName>Fusion glycoprotein F0</fullName>
    </recommendedName>
    <component>
        <recommendedName>
            <fullName>Fusion glycoprotein F2</fullName>
        </recommendedName>
    </component>
    <component>
        <recommendedName>
            <fullName>Fusion glycoprotein F1</fullName>
        </recommendedName>
    </component>
</protein>
<organismHost>
    <name type="scientific">Homo sapiens</name>
    <name type="common">Human</name>
    <dbReference type="NCBI Taxonomy" id="9606"/>
</organismHost>